<accession>P12438</accession>
<sequence length="333" mass="38082">MPVLMPSADVPTIDISPLFGTDPDAKAHVARQINEACRGSGFFYASHHGIDVRRLQDVVNEFHRTMTDQEKHDLAIHAYNENNSHVRNGYYMARPGRKTVESWCYLNPSFGEDHPMIKAGTPMHEVNVWPDEERHPDFRSFGEQYYREVFRLSKVLLLRGFALALGKPEEFFENEVTEEDTLSCRSLMIRYPYLDPYPEAAIKTGPDGTRLSFEDHLDVSMITVLFQTEVQNLQVETVDGWQSLPTSGENFLINCGTYLGYLTNDYFPAPNHRVKYVNAERLSLPFFLHAGQNSVMKPFHPEDTGDRKLNPAVTYGEYLQEGFHALIAKNVQT</sequence>
<evidence type="ECO:0000250" key="1">
    <source>
        <dbReference type="UniProtKB" id="P05326"/>
    </source>
</evidence>
<evidence type="ECO:0000255" key="2">
    <source>
        <dbReference type="PROSITE-ProRule" id="PRU00805"/>
    </source>
</evidence>
<evidence type="ECO:0000305" key="3"/>
<reference key="1">
    <citation type="journal article" date="1988" name="J. Bacteriol.">
        <title>Cloning and expression in Escherichia coli of isopenicillin N synthetase genes from Streptomyces lipmanii and Aspergillus nidulans.</title>
        <authorList>
            <person name="Weigel B.J."/>
            <person name="Burgett S.G."/>
            <person name="Chen V.J."/>
            <person name="Skatrud P.L."/>
            <person name="Frolik C.A."/>
            <person name="Queener S.W."/>
            <person name="Ingolia T.D."/>
        </authorList>
    </citation>
    <scope>NUCLEOTIDE SEQUENCE [GENOMIC DNA]</scope>
</reference>
<comment type="function">
    <text>Removes, in the presence of oxygen, 4 hydrogen atoms from delta-L-(alpha-aminoadipyl)-L-cysteinyl-D-valine (ACV) to form the azetidinone and thiazolidine rings of isopenicillin.</text>
</comment>
<comment type="catalytic activity">
    <reaction>
        <text>N-[(5S)-5-amino-5-carboxypentanoyl]-L-cysteinyl-D-valine + O2 = isopenicillin N + 2 H2O</text>
        <dbReference type="Rhea" id="RHEA:22428"/>
        <dbReference type="ChEBI" id="CHEBI:15377"/>
        <dbReference type="ChEBI" id="CHEBI:15379"/>
        <dbReference type="ChEBI" id="CHEBI:58399"/>
        <dbReference type="ChEBI" id="CHEBI:58572"/>
        <dbReference type="EC" id="1.21.3.1"/>
    </reaction>
</comment>
<comment type="cofactor">
    <cofactor>
        <name>Fe cation</name>
        <dbReference type="ChEBI" id="CHEBI:24875"/>
    </cofactor>
</comment>
<comment type="cofactor">
    <cofactor>
        <name>L-ascorbate</name>
        <dbReference type="ChEBI" id="CHEBI:38290"/>
    </cofactor>
</comment>
<comment type="pathway">
    <text>Antibiotic biosynthesis; penicillin G biosynthesis; penicillin G from L-alpha-aminoadipate and L-cysteine and L-valine: step 2/3.</text>
</comment>
<comment type="similarity">
    <text evidence="3">Belongs to the iron/ascorbate-dependent oxidoreductase family.</text>
</comment>
<proteinExistence type="inferred from homology"/>
<dbReference type="EC" id="1.21.3.1"/>
<dbReference type="EMBL" id="M22081">
    <property type="protein sequence ID" value="AAA26771.1"/>
    <property type="molecule type" value="Genomic_DNA"/>
</dbReference>
<dbReference type="SMR" id="P12438"/>
<dbReference type="BRENDA" id="1.21.3.1">
    <property type="organism ID" value="6051"/>
</dbReference>
<dbReference type="UniPathway" id="UPA00149">
    <property type="reaction ID" value="UER00240"/>
</dbReference>
<dbReference type="GO" id="GO:0005506">
    <property type="term" value="F:iron ion binding"/>
    <property type="evidence" value="ECO:0007669"/>
    <property type="project" value="InterPro"/>
</dbReference>
<dbReference type="GO" id="GO:0016216">
    <property type="term" value="F:isopenicillin-N synthase activity"/>
    <property type="evidence" value="ECO:0007669"/>
    <property type="project" value="UniProtKB-EC"/>
</dbReference>
<dbReference type="GO" id="GO:0031418">
    <property type="term" value="F:L-ascorbic acid binding"/>
    <property type="evidence" value="ECO:0007669"/>
    <property type="project" value="UniProtKB-KW"/>
</dbReference>
<dbReference type="GO" id="GO:0017000">
    <property type="term" value="P:antibiotic biosynthetic process"/>
    <property type="evidence" value="ECO:0007669"/>
    <property type="project" value="UniProtKB-KW"/>
</dbReference>
<dbReference type="Gene3D" id="2.60.120.330">
    <property type="entry name" value="B-lactam Antibiotic, Isopenicillin N Synthase, Chain"/>
    <property type="match status" value="1"/>
</dbReference>
<dbReference type="InterPro" id="IPR026992">
    <property type="entry name" value="DIOX_N"/>
</dbReference>
<dbReference type="InterPro" id="IPR044861">
    <property type="entry name" value="IPNS-like_FE2OG_OXY"/>
</dbReference>
<dbReference type="InterPro" id="IPR027443">
    <property type="entry name" value="IPNS-like_sf"/>
</dbReference>
<dbReference type="InterPro" id="IPR050231">
    <property type="entry name" value="Iron_ascorbate_oxido_reductase"/>
</dbReference>
<dbReference type="InterPro" id="IPR002057">
    <property type="entry name" value="Isopenicillin-N_synth_CS"/>
</dbReference>
<dbReference type="InterPro" id="IPR005123">
    <property type="entry name" value="Oxoglu/Fe-dep_dioxygenase_dom"/>
</dbReference>
<dbReference type="PANTHER" id="PTHR47990">
    <property type="entry name" value="2-OXOGLUTARATE (2OG) AND FE(II)-DEPENDENT OXYGENASE SUPERFAMILY PROTEIN-RELATED"/>
    <property type="match status" value="1"/>
</dbReference>
<dbReference type="Pfam" id="PF03171">
    <property type="entry name" value="2OG-FeII_Oxy"/>
    <property type="match status" value="1"/>
</dbReference>
<dbReference type="Pfam" id="PF14226">
    <property type="entry name" value="DIOX_N"/>
    <property type="match status" value="1"/>
</dbReference>
<dbReference type="PRINTS" id="PR00682">
    <property type="entry name" value="IPNSYNTHASE"/>
</dbReference>
<dbReference type="SUPFAM" id="SSF51197">
    <property type="entry name" value="Clavaminate synthase-like"/>
    <property type="match status" value="1"/>
</dbReference>
<dbReference type="PROSITE" id="PS51471">
    <property type="entry name" value="FE2OG_OXY"/>
    <property type="match status" value="1"/>
</dbReference>
<dbReference type="PROSITE" id="PS00185">
    <property type="entry name" value="IPNS_1"/>
    <property type="match status" value="1"/>
</dbReference>
<dbReference type="PROSITE" id="PS00186">
    <property type="entry name" value="IPNS_2"/>
    <property type="match status" value="1"/>
</dbReference>
<gene>
    <name type="primary">pcbC</name>
</gene>
<protein>
    <recommendedName>
        <fullName>Isopenicillin N synthase</fullName>
        <shortName>IPNS</shortName>
        <ecNumber>1.21.3.1</ecNumber>
    </recommendedName>
</protein>
<name>IPNS_STRMI</name>
<feature type="chain" id="PRO_0000219508" description="Isopenicillin N synthase">
    <location>
        <begin position="1"/>
        <end position="333"/>
    </location>
</feature>
<feature type="domain" description="Fe2OG dioxygenase" evidence="2">
    <location>
        <begin position="180"/>
        <end position="290"/>
    </location>
</feature>
<feature type="binding site" evidence="1">
    <location>
        <position position="87"/>
    </location>
    <ligand>
        <name>isopenicillin N</name>
        <dbReference type="ChEBI" id="CHEBI:58399"/>
    </ligand>
</feature>
<feature type="binding site" evidence="1">
    <location>
        <position position="87"/>
    </location>
    <ligand>
        <name>N-[(5S)-5-amino-5-carboxypentanoyl]-L-cysteinyl-D-valine</name>
        <dbReference type="ChEBI" id="CHEBI:58572"/>
    </ligand>
</feature>
<feature type="binding site" evidence="1">
    <location>
        <position position="91"/>
    </location>
    <ligand>
        <name>isopenicillin N</name>
        <dbReference type="ChEBI" id="CHEBI:58399"/>
    </ligand>
</feature>
<feature type="binding site" evidence="1">
    <location>
        <position position="91"/>
    </location>
    <ligand>
        <name>N-[(5S)-5-amino-5-carboxypentanoyl]-L-cysteinyl-D-valine</name>
        <dbReference type="ChEBI" id="CHEBI:58572"/>
    </ligand>
</feature>
<feature type="binding site" evidence="1">
    <location>
        <position position="191"/>
    </location>
    <ligand>
        <name>isopenicillin N</name>
        <dbReference type="ChEBI" id="CHEBI:58399"/>
    </ligand>
</feature>
<feature type="binding site" evidence="1">
    <location>
        <position position="191"/>
    </location>
    <ligand>
        <name>N-[(5S)-5-amino-5-carboxypentanoyl]-L-cysteinyl-D-valine</name>
        <dbReference type="ChEBI" id="CHEBI:58572"/>
    </ligand>
</feature>
<feature type="binding site" evidence="2">
    <location>
        <position position="216"/>
    </location>
    <ligand>
        <name>Fe(2+)</name>
        <dbReference type="ChEBI" id="CHEBI:29033"/>
    </ligand>
</feature>
<feature type="binding site" evidence="1">
    <location>
        <position position="216"/>
    </location>
    <ligand>
        <name>N-[(5S)-5-amino-5-carboxypentanoyl]-L-cysteinyl-D-valine</name>
        <dbReference type="ChEBI" id="CHEBI:58572"/>
    </ligand>
</feature>
<feature type="binding site" evidence="2">
    <location>
        <position position="218"/>
    </location>
    <ligand>
        <name>Fe(2+)</name>
        <dbReference type="ChEBI" id="CHEBI:29033"/>
    </ligand>
</feature>
<feature type="binding site" evidence="1">
    <location>
        <position position="218"/>
    </location>
    <ligand>
        <name>N-[(5S)-5-amino-5-carboxypentanoyl]-L-cysteinyl-D-valine</name>
        <dbReference type="ChEBI" id="CHEBI:58572"/>
    </ligand>
</feature>
<feature type="binding site" evidence="2">
    <location>
        <position position="272"/>
    </location>
    <ligand>
        <name>Fe(2+)</name>
        <dbReference type="ChEBI" id="CHEBI:29033"/>
    </ligand>
</feature>
<feature type="binding site" evidence="2">
    <location>
        <position position="281"/>
    </location>
    <ligand>
        <name>2-oxoglutarate</name>
        <dbReference type="ChEBI" id="CHEBI:16810"/>
    </ligand>
</feature>
<feature type="binding site" evidence="1">
    <location>
        <position position="283"/>
    </location>
    <ligand>
        <name>isopenicillin N</name>
        <dbReference type="ChEBI" id="CHEBI:58399"/>
    </ligand>
</feature>
<feature type="binding site" evidence="1">
    <location>
        <position position="283"/>
    </location>
    <ligand>
        <name>N-[(5S)-5-amino-5-carboxypentanoyl]-L-cysteinyl-D-valine</name>
        <dbReference type="ChEBI" id="CHEBI:58572"/>
    </ligand>
</feature>
<organism>
    <name type="scientific">Streptomyces microflavus</name>
    <name type="common">Streptomyces lipmanii</name>
    <dbReference type="NCBI Taxonomy" id="1919"/>
    <lineage>
        <taxon>Bacteria</taxon>
        <taxon>Bacillati</taxon>
        <taxon>Actinomycetota</taxon>
        <taxon>Actinomycetes</taxon>
        <taxon>Kitasatosporales</taxon>
        <taxon>Streptomycetaceae</taxon>
        <taxon>Streptomyces</taxon>
    </lineage>
</organism>
<keyword id="KW-0045">Antibiotic biosynthesis</keyword>
<keyword id="KW-0408">Iron</keyword>
<keyword id="KW-0479">Metal-binding</keyword>
<keyword id="KW-0560">Oxidoreductase</keyword>
<keyword id="KW-0847">Vitamin C</keyword>